<proteinExistence type="inferred from homology"/>
<accession>A4W509</accession>
<sequence length="152" mass="16107">MMKKIDVKILDPRVGQQFPLPTYATSGSAGLDLRACLDEAVALAPGATTLIPTGLAIHVADPSLAAVILPRSGLGHKHGIVLGNLVGLIDSDYQGQLMVSVWNRGQDSFTIEPGERIAQMVFVPVVQAEFNLVDDFDATDRGEGGFGHSGRK</sequence>
<keyword id="KW-0378">Hydrolase</keyword>
<keyword id="KW-0460">Magnesium</keyword>
<keyword id="KW-0479">Metal-binding</keyword>
<keyword id="KW-0546">Nucleotide metabolism</keyword>
<feature type="chain" id="PRO_1000057771" description="Deoxyuridine 5'-triphosphate nucleotidohydrolase">
    <location>
        <begin position="1"/>
        <end position="152"/>
    </location>
</feature>
<feature type="binding site" evidence="1">
    <location>
        <begin position="71"/>
        <end position="73"/>
    </location>
    <ligand>
        <name>substrate</name>
    </ligand>
</feature>
<feature type="binding site" evidence="1">
    <location>
        <position position="84"/>
    </location>
    <ligand>
        <name>substrate</name>
    </ligand>
</feature>
<feature type="binding site" evidence="1">
    <location>
        <begin position="88"/>
        <end position="90"/>
    </location>
    <ligand>
        <name>substrate</name>
    </ligand>
</feature>
<feature type="binding site" evidence="1">
    <location>
        <position position="98"/>
    </location>
    <ligand>
        <name>substrate</name>
    </ligand>
</feature>
<organism>
    <name type="scientific">Enterobacter sp. (strain 638)</name>
    <dbReference type="NCBI Taxonomy" id="399742"/>
    <lineage>
        <taxon>Bacteria</taxon>
        <taxon>Pseudomonadati</taxon>
        <taxon>Pseudomonadota</taxon>
        <taxon>Gammaproteobacteria</taxon>
        <taxon>Enterobacterales</taxon>
        <taxon>Enterobacteriaceae</taxon>
        <taxon>Enterobacter</taxon>
    </lineage>
</organism>
<dbReference type="EC" id="3.6.1.23" evidence="1"/>
<dbReference type="EMBL" id="CP000653">
    <property type="protein sequence ID" value="ABP58789.1"/>
    <property type="molecule type" value="Genomic_DNA"/>
</dbReference>
<dbReference type="RefSeq" id="WP_011915367.1">
    <property type="nucleotide sequence ID" value="NC_009436.1"/>
</dbReference>
<dbReference type="SMR" id="A4W509"/>
<dbReference type="STRING" id="399742.Ent638_0099"/>
<dbReference type="KEGG" id="ent:Ent638_0099"/>
<dbReference type="eggNOG" id="COG0756">
    <property type="taxonomic scope" value="Bacteria"/>
</dbReference>
<dbReference type="HOGENOM" id="CLU_068508_1_1_6"/>
<dbReference type="UniPathway" id="UPA00610">
    <property type="reaction ID" value="UER00666"/>
</dbReference>
<dbReference type="Proteomes" id="UP000000230">
    <property type="component" value="Chromosome"/>
</dbReference>
<dbReference type="GO" id="GO:0004170">
    <property type="term" value="F:dUTP diphosphatase activity"/>
    <property type="evidence" value="ECO:0007669"/>
    <property type="project" value="UniProtKB-UniRule"/>
</dbReference>
<dbReference type="GO" id="GO:0000287">
    <property type="term" value="F:magnesium ion binding"/>
    <property type="evidence" value="ECO:0007669"/>
    <property type="project" value="UniProtKB-UniRule"/>
</dbReference>
<dbReference type="GO" id="GO:0006226">
    <property type="term" value="P:dUMP biosynthetic process"/>
    <property type="evidence" value="ECO:0007669"/>
    <property type="project" value="UniProtKB-UniRule"/>
</dbReference>
<dbReference type="GO" id="GO:0046081">
    <property type="term" value="P:dUTP catabolic process"/>
    <property type="evidence" value="ECO:0007669"/>
    <property type="project" value="InterPro"/>
</dbReference>
<dbReference type="CDD" id="cd07557">
    <property type="entry name" value="trimeric_dUTPase"/>
    <property type="match status" value="1"/>
</dbReference>
<dbReference type="FunFam" id="2.70.40.10:FF:000002">
    <property type="entry name" value="dUTP diphosphatase"/>
    <property type="match status" value="1"/>
</dbReference>
<dbReference type="Gene3D" id="2.70.40.10">
    <property type="match status" value="1"/>
</dbReference>
<dbReference type="HAMAP" id="MF_00116">
    <property type="entry name" value="dUTPase_bact"/>
    <property type="match status" value="1"/>
</dbReference>
<dbReference type="InterPro" id="IPR008181">
    <property type="entry name" value="dUTPase"/>
</dbReference>
<dbReference type="InterPro" id="IPR029054">
    <property type="entry name" value="dUTPase-like"/>
</dbReference>
<dbReference type="InterPro" id="IPR036157">
    <property type="entry name" value="dUTPase-like_sf"/>
</dbReference>
<dbReference type="InterPro" id="IPR033704">
    <property type="entry name" value="dUTPase_trimeric"/>
</dbReference>
<dbReference type="NCBIfam" id="TIGR00576">
    <property type="entry name" value="dut"/>
    <property type="match status" value="1"/>
</dbReference>
<dbReference type="NCBIfam" id="NF001862">
    <property type="entry name" value="PRK00601.1"/>
    <property type="match status" value="1"/>
</dbReference>
<dbReference type="PANTHER" id="PTHR11241">
    <property type="entry name" value="DEOXYURIDINE 5'-TRIPHOSPHATE NUCLEOTIDOHYDROLASE"/>
    <property type="match status" value="1"/>
</dbReference>
<dbReference type="PANTHER" id="PTHR11241:SF0">
    <property type="entry name" value="DEOXYURIDINE 5'-TRIPHOSPHATE NUCLEOTIDOHYDROLASE"/>
    <property type="match status" value="1"/>
</dbReference>
<dbReference type="Pfam" id="PF00692">
    <property type="entry name" value="dUTPase"/>
    <property type="match status" value="1"/>
</dbReference>
<dbReference type="SUPFAM" id="SSF51283">
    <property type="entry name" value="dUTPase-like"/>
    <property type="match status" value="1"/>
</dbReference>
<comment type="function">
    <text evidence="1">This enzyme is involved in nucleotide metabolism: it produces dUMP, the immediate precursor of thymidine nucleotides and it decreases the intracellular concentration of dUTP so that uracil cannot be incorporated into DNA.</text>
</comment>
<comment type="catalytic activity">
    <reaction evidence="1">
        <text>dUTP + H2O = dUMP + diphosphate + H(+)</text>
        <dbReference type="Rhea" id="RHEA:10248"/>
        <dbReference type="ChEBI" id="CHEBI:15377"/>
        <dbReference type="ChEBI" id="CHEBI:15378"/>
        <dbReference type="ChEBI" id="CHEBI:33019"/>
        <dbReference type="ChEBI" id="CHEBI:61555"/>
        <dbReference type="ChEBI" id="CHEBI:246422"/>
        <dbReference type="EC" id="3.6.1.23"/>
    </reaction>
</comment>
<comment type="cofactor">
    <cofactor evidence="1">
        <name>Mg(2+)</name>
        <dbReference type="ChEBI" id="CHEBI:18420"/>
    </cofactor>
</comment>
<comment type="pathway">
    <text evidence="1">Pyrimidine metabolism; dUMP biosynthesis; dUMP from dCTP (dUTP route): step 2/2.</text>
</comment>
<comment type="similarity">
    <text evidence="1">Belongs to the dUTPase family.</text>
</comment>
<gene>
    <name evidence="1" type="primary">dut</name>
    <name type="ordered locus">Ent638_0099</name>
</gene>
<protein>
    <recommendedName>
        <fullName evidence="1">Deoxyuridine 5'-triphosphate nucleotidohydrolase</fullName>
        <shortName evidence="1">dUTPase</shortName>
        <ecNumber evidence="1">3.6.1.23</ecNumber>
    </recommendedName>
    <alternativeName>
        <fullName evidence="1">dUTP pyrophosphatase</fullName>
    </alternativeName>
</protein>
<evidence type="ECO:0000255" key="1">
    <source>
        <dbReference type="HAMAP-Rule" id="MF_00116"/>
    </source>
</evidence>
<reference key="1">
    <citation type="journal article" date="2010" name="PLoS Genet.">
        <title>Genome sequence of the plant growth promoting endophytic bacterium Enterobacter sp. 638.</title>
        <authorList>
            <person name="Taghavi S."/>
            <person name="van der Lelie D."/>
            <person name="Hoffman A."/>
            <person name="Zhang Y.B."/>
            <person name="Walla M.D."/>
            <person name="Vangronsveld J."/>
            <person name="Newman L."/>
            <person name="Monchy S."/>
        </authorList>
    </citation>
    <scope>NUCLEOTIDE SEQUENCE [LARGE SCALE GENOMIC DNA]</scope>
    <source>
        <strain>638</strain>
    </source>
</reference>
<name>DUT_ENT38</name>